<reference key="1">
    <citation type="journal article" date="1992" name="Gene">
        <title>Structure and expression of a gene from Arabidopsis thaliana encoding a protein related to SNF1 protein kinase.</title>
        <authorList>
            <person name="le Guen L."/>
            <person name="Thomas M."/>
            <person name="Bianchi M."/>
            <person name="Halford N.G."/>
            <person name="Kreis M."/>
        </authorList>
    </citation>
    <scope>NUCLEOTIDE SEQUENCE [GENOMIC DNA]</scope>
    <source>
        <strain>cv. Columbia</strain>
    </source>
</reference>
<reference key="2">
    <citation type="submission" date="1996-12" db="EMBL/GenBank/DDBJ databases">
        <authorList>
            <person name="Lessard P."/>
            <person name="Kreis M."/>
            <person name="Thomas M."/>
        </authorList>
    </citation>
    <scope>NUCLEOTIDE SEQUENCE [MRNA] (ISOFORM 2)</scope>
    <source>
        <strain>cv. Columbia</strain>
        <tissue>Seedling</tissue>
    </source>
</reference>
<reference key="3">
    <citation type="submission" date="2006-06" db="EMBL/GenBank/DDBJ databases">
        <title>Functional differentiation of ubiquitin-interacting factors from Arabidopsis.</title>
        <authorList>
            <person name="Fu H."/>
        </authorList>
    </citation>
    <scope>NUCLEOTIDE SEQUENCE [MRNA] (ISOFORM 2)</scope>
    <source>
        <strain>cv. Columbia</strain>
    </source>
</reference>
<reference key="4">
    <citation type="journal article" date="2000" name="Nature">
        <title>Sequence and analysis of chromosome 3 of the plant Arabidopsis thaliana.</title>
        <authorList>
            <person name="Salanoubat M."/>
            <person name="Lemcke K."/>
            <person name="Rieger M."/>
            <person name="Ansorge W."/>
            <person name="Unseld M."/>
            <person name="Fartmann B."/>
            <person name="Valle G."/>
            <person name="Bloecker H."/>
            <person name="Perez-Alonso M."/>
            <person name="Obermaier B."/>
            <person name="Delseny M."/>
            <person name="Boutry M."/>
            <person name="Grivell L.A."/>
            <person name="Mache R."/>
            <person name="Puigdomenech P."/>
            <person name="De Simone V."/>
            <person name="Choisne N."/>
            <person name="Artiguenave F."/>
            <person name="Robert C."/>
            <person name="Brottier P."/>
            <person name="Wincker P."/>
            <person name="Cattolico L."/>
            <person name="Weissenbach J."/>
            <person name="Saurin W."/>
            <person name="Quetier F."/>
            <person name="Schaefer M."/>
            <person name="Mueller-Auer S."/>
            <person name="Gabel C."/>
            <person name="Fuchs M."/>
            <person name="Benes V."/>
            <person name="Wurmbach E."/>
            <person name="Drzonek H."/>
            <person name="Erfle H."/>
            <person name="Jordan N."/>
            <person name="Bangert S."/>
            <person name="Wiedelmann R."/>
            <person name="Kranz H."/>
            <person name="Voss H."/>
            <person name="Holland R."/>
            <person name="Brandt P."/>
            <person name="Nyakatura G."/>
            <person name="Vezzi A."/>
            <person name="D'Angelo M."/>
            <person name="Pallavicini A."/>
            <person name="Toppo S."/>
            <person name="Simionati B."/>
            <person name="Conrad A."/>
            <person name="Hornischer K."/>
            <person name="Kauer G."/>
            <person name="Loehnert T.-H."/>
            <person name="Nordsiek G."/>
            <person name="Reichelt J."/>
            <person name="Scharfe M."/>
            <person name="Schoen O."/>
            <person name="Bargues M."/>
            <person name="Terol J."/>
            <person name="Climent J."/>
            <person name="Navarro P."/>
            <person name="Collado C."/>
            <person name="Perez-Perez A."/>
            <person name="Ottenwaelder B."/>
            <person name="Duchemin D."/>
            <person name="Cooke R."/>
            <person name="Laudie M."/>
            <person name="Berger-Llauro C."/>
            <person name="Purnelle B."/>
            <person name="Masuy D."/>
            <person name="de Haan M."/>
            <person name="Maarse A.C."/>
            <person name="Alcaraz J.-P."/>
            <person name="Cottet A."/>
            <person name="Casacuberta E."/>
            <person name="Monfort A."/>
            <person name="Argiriou A."/>
            <person name="Flores M."/>
            <person name="Liguori R."/>
            <person name="Vitale D."/>
            <person name="Mannhaupt G."/>
            <person name="Haase D."/>
            <person name="Schoof H."/>
            <person name="Rudd S."/>
            <person name="Zaccaria P."/>
            <person name="Mewes H.-W."/>
            <person name="Mayer K.F.X."/>
            <person name="Kaul S."/>
            <person name="Town C.D."/>
            <person name="Koo H.L."/>
            <person name="Tallon L.J."/>
            <person name="Jenkins J."/>
            <person name="Rooney T."/>
            <person name="Rizzo M."/>
            <person name="Walts A."/>
            <person name="Utterback T."/>
            <person name="Fujii C.Y."/>
            <person name="Shea T.P."/>
            <person name="Creasy T.H."/>
            <person name="Haas B."/>
            <person name="Maiti R."/>
            <person name="Wu D."/>
            <person name="Peterson J."/>
            <person name="Van Aken S."/>
            <person name="Pai G."/>
            <person name="Militscher J."/>
            <person name="Sellers P."/>
            <person name="Gill J.E."/>
            <person name="Feldblyum T.V."/>
            <person name="Preuss D."/>
            <person name="Lin X."/>
            <person name="Nierman W.C."/>
            <person name="Salzberg S.L."/>
            <person name="White O."/>
            <person name="Venter J.C."/>
            <person name="Fraser C.M."/>
            <person name="Kaneko T."/>
            <person name="Nakamura Y."/>
            <person name="Sato S."/>
            <person name="Kato T."/>
            <person name="Asamizu E."/>
            <person name="Sasamoto S."/>
            <person name="Kimura T."/>
            <person name="Idesawa K."/>
            <person name="Kawashima K."/>
            <person name="Kishida Y."/>
            <person name="Kiyokawa C."/>
            <person name="Kohara M."/>
            <person name="Matsumoto M."/>
            <person name="Matsuno A."/>
            <person name="Muraki A."/>
            <person name="Nakayama S."/>
            <person name="Nakazaki N."/>
            <person name="Shinpo S."/>
            <person name="Takeuchi C."/>
            <person name="Wada T."/>
            <person name="Watanabe A."/>
            <person name="Yamada M."/>
            <person name="Yasuda M."/>
            <person name="Tabata S."/>
        </authorList>
    </citation>
    <scope>NUCLEOTIDE SEQUENCE [LARGE SCALE GENOMIC DNA]</scope>
    <source>
        <strain>cv. Columbia</strain>
    </source>
</reference>
<reference key="5">
    <citation type="journal article" date="2017" name="Plant J.">
        <title>Araport11: a complete reannotation of the Arabidopsis thaliana reference genome.</title>
        <authorList>
            <person name="Cheng C.Y."/>
            <person name="Krishnakumar V."/>
            <person name="Chan A.P."/>
            <person name="Thibaud-Nissen F."/>
            <person name="Schobel S."/>
            <person name="Town C.D."/>
        </authorList>
    </citation>
    <scope>GENOME REANNOTATION</scope>
    <source>
        <strain>cv. Columbia</strain>
    </source>
</reference>
<reference key="6">
    <citation type="journal article" date="2003" name="Science">
        <title>Empirical analysis of transcriptional activity in the Arabidopsis genome.</title>
        <authorList>
            <person name="Yamada K."/>
            <person name="Lim J."/>
            <person name="Dale J.M."/>
            <person name="Chen H."/>
            <person name="Shinn P."/>
            <person name="Palm C.J."/>
            <person name="Southwick A.M."/>
            <person name="Wu H.C."/>
            <person name="Kim C.J."/>
            <person name="Nguyen M."/>
            <person name="Pham P.K."/>
            <person name="Cheuk R.F."/>
            <person name="Karlin-Newmann G."/>
            <person name="Liu S.X."/>
            <person name="Lam B."/>
            <person name="Sakano H."/>
            <person name="Wu T."/>
            <person name="Yu G."/>
            <person name="Miranda M."/>
            <person name="Quach H.L."/>
            <person name="Tripp M."/>
            <person name="Chang C.H."/>
            <person name="Lee J.M."/>
            <person name="Toriumi M.J."/>
            <person name="Chan M.M."/>
            <person name="Tang C.C."/>
            <person name="Onodera C.S."/>
            <person name="Deng J.M."/>
            <person name="Akiyama K."/>
            <person name="Ansari Y."/>
            <person name="Arakawa T."/>
            <person name="Banh J."/>
            <person name="Banno F."/>
            <person name="Bowser L."/>
            <person name="Brooks S.Y."/>
            <person name="Carninci P."/>
            <person name="Chao Q."/>
            <person name="Choy N."/>
            <person name="Enju A."/>
            <person name="Goldsmith A.D."/>
            <person name="Gurjal M."/>
            <person name="Hansen N.F."/>
            <person name="Hayashizaki Y."/>
            <person name="Johnson-Hopson C."/>
            <person name="Hsuan V.W."/>
            <person name="Iida K."/>
            <person name="Karnes M."/>
            <person name="Khan S."/>
            <person name="Koesema E."/>
            <person name="Ishida J."/>
            <person name="Jiang P.X."/>
            <person name="Jones T."/>
            <person name="Kawai J."/>
            <person name="Kamiya A."/>
            <person name="Meyers C."/>
            <person name="Nakajima M."/>
            <person name="Narusaka M."/>
            <person name="Seki M."/>
            <person name="Sakurai T."/>
            <person name="Satou M."/>
            <person name="Tamse R."/>
            <person name="Vaysberg M."/>
            <person name="Wallender E.K."/>
            <person name="Wong C."/>
            <person name="Yamamura Y."/>
            <person name="Yuan S."/>
            <person name="Shinozaki K."/>
            <person name="Davis R.W."/>
            <person name="Theologis A."/>
            <person name="Ecker J.R."/>
        </authorList>
    </citation>
    <scope>NUCLEOTIDE SEQUENCE [LARGE SCALE MRNA] (ISOFORM 1)</scope>
    <source>
        <strain>cv. Columbia</strain>
    </source>
</reference>
<reference key="7">
    <citation type="journal article" date="1994" name="Mol. Gen. Genet.">
        <title>Gene density and organization in a small region of the Arabidopsis thaliana genome.</title>
        <authorList>
            <person name="le Guen L."/>
            <person name="Thomas M."/>
            <person name="Kreis M."/>
        </authorList>
    </citation>
    <scope>NUCLEOTIDE SEQUENCE [GENOMIC DNA] OF 1-19 (ISOFORM 2)</scope>
    <source>
        <strain>cv. Columbia</strain>
    </source>
</reference>
<reference key="8">
    <citation type="journal article" date="1995" name="Plant Mol. Biol.">
        <title>Differential accumulation of the transcripts of 22 novel protein kinase genes in Arabidopsis thaliana.</title>
        <authorList>
            <person name="Thuemmler F."/>
            <person name="Kirchner M."/>
            <person name="Teuber R."/>
            <person name="Dittrich P."/>
        </authorList>
    </citation>
    <scope>NUCLEOTIDE SEQUENCE [GENOMIC DNA] OF 144-198</scope>
    <source>
        <strain>cv. Eil-0</strain>
        <tissue>Leaf</tissue>
    </source>
</reference>
<reference key="9">
    <citation type="journal article" date="1999" name="Proc. Natl. Acad. Sci. U.S.A.">
        <title>Regulatory interaction of PRL1 WD protein with Arabidopsis SNF1-like protein kinases.</title>
        <authorList>
            <person name="Bhalerao R.P."/>
            <person name="Salchert K."/>
            <person name="Bako L."/>
            <person name="Oekresz L."/>
            <person name="Szabados L."/>
            <person name="Muranaka T."/>
            <person name="Machida Y."/>
            <person name="Schell J."/>
            <person name="Koncz C."/>
        </authorList>
    </citation>
    <scope>FUNCTION</scope>
    <scope>PHOSPHORYLATION</scope>
    <scope>INDUCTION</scope>
    <scope>INTERACTION WITH PRL1</scope>
</reference>
<reference key="10">
    <citation type="journal article" date="2000" name="Plant J.">
        <title>Functional identification of an Arabidopsis Snf4 ortholog by screening for heterologous multicopy suppressors of snf4 deficiency in yeast.</title>
        <authorList>
            <person name="Kleinow T."/>
            <person name="Bhalerao R."/>
            <person name="Breuer F."/>
            <person name="Umeda M."/>
            <person name="Salchert K."/>
            <person name="Koncz C."/>
        </authorList>
    </citation>
    <scope>INTERACTION WITH SNF4</scope>
</reference>
<reference key="11">
    <citation type="journal article" date="2001" name="EMBO J.">
        <title>SKP1-SnRK protein kinase interactions mediate proteasomal binding of a plant SCF ubiquitin ligase.</title>
        <authorList>
            <person name="Farras R."/>
            <person name="Ferrando A."/>
            <person name="Jasik J."/>
            <person name="Kleinow T."/>
            <person name="Oekresz L."/>
            <person name="Tiburcio A."/>
            <person name="Salchert K."/>
            <person name="del Pozo C."/>
            <person name="Schell J."/>
            <person name="Koncz C."/>
        </authorList>
    </citation>
    <scope>FUNCTION</scope>
    <scope>INTERACTION WITH SKP1 AND PAD1</scope>
</reference>
<reference key="12">
    <citation type="journal article" date="2001" name="Nucleic Acids Res.">
        <title>Detection of in vivo protein interactions between Snf1-related kinase subunits with intron-tagged epitope-labelling in plants cells.</title>
        <authorList>
            <person name="Ferrando A."/>
            <person name="Koncz-Kalman Z."/>
            <person name="Farras R."/>
            <person name="Tiburcio A."/>
            <person name="Schell J."/>
            <person name="Koncz C."/>
        </authorList>
    </citation>
    <scope>INTERACTION WITH KINB2</scope>
</reference>
<reference key="13">
    <citation type="journal article" date="2003" name="Plant Physiol.">
        <title>The Arabidopsis CDPK-SnRK superfamily of protein kinases.</title>
        <authorList>
            <person name="Hrabak E.M."/>
            <person name="Chan C.W.M."/>
            <person name="Gribskov M."/>
            <person name="Harper J.F."/>
            <person name="Choi J.H."/>
            <person name="Halford N."/>
            <person name="Kudla J."/>
            <person name="Luan S."/>
            <person name="Nimmo H.G."/>
            <person name="Sussman M.R."/>
            <person name="Thomas M."/>
            <person name="Walker-Simmons K."/>
            <person name="Zhu J.-K."/>
            <person name="Harmon A.C."/>
        </authorList>
    </citation>
    <scope>GENE FAMILY</scope>
    <scope>NOMENCLATURE</scope>
</reference>
<reference key="14">
    <citation type="journal article" date="2004" name="Plant Mol. Biol.">
        <title>AKINbeta3, a plant specific SnRK1 protein, is lacking domains present in yeast and mammals non-catalytic beta-subunits.</title>
        <authorList>
            <person name="Gissot L."/>
            <person name="Polge C."/>
            <person name="Bouly J.P."/>
            <person name="Lemaitre T."/>
            <person name="Kreis M."/>
            <person name="Thomas M."/>
        </authorList>
    </citation>
    <scope>INTERACTION WITH KINB3</scope>
</reference>
<reference key="15">
    <citation type="journal article" date="2006" name="Plant Physiol.">
        <title>AKINbetagamma contributes to SnRK1 heterotrimeric complexes and interacts with two proteins implicated in plant pathogen resistance through its KIS/GBD sequence.</title>
        <authorList>
            <person name="Gissot L."/>
            <person name="Polge C."/>
            <person name="Jossier M."/>
            <person name="Girin T."/>
            <person name="Bouly J.-P."/>
            <person name="Kreis M."/>
            <person name="Thomas M."/>
        </authorList>
    </citation>
    <scope>INTERACTION WITH SNF4</scope>
    <scope>COMPONENT OF A HETEROTRIMERIC COMPLEX</scope>
    <scope>SUBUNIT</scope>
</reference>
<reference key="16">
    <citation type="journal article" date="2007" name="Mol. Cell. Proteomics">
        <title>Multidimensional protein identification technology (MudPIT) analysis of ubiquitinated proteins in plants.</title>
        <authorList>
            <person name="Maor R."/>
            <person name="Jones A."/>
            <person name="Nuehse T.S."/>
            <person name="Studholme D.J."/>
            <person name="Peck S.C."/>
            <person name="Shirasu K."/>
        </authorList>
    </citation>
    <scope>UBIQUITINATION [LARGE SCALE ANALYSIS] AT LYS-20</scope>
    <scope>IDENTIFICATION BY MASS SPECTROMETRY [LARGE SCALE ANALYSIS]</scope>
    <source>
        <strain>cv. Landsberg erecta</strain>
    </source>
</reference>
<reference key="17">
    <citation type="journal article" date="2007" name="Nature">
        <title>A central integrator of transcription networks in plant stress and energy signalling.</title>
        <authorList>
            <person name="Baena-Gonzalez E."/>
            <person name="Rolland F."/>
            <person name="Thevelein J.M."/>
            <person name="Sheen J."/>
        </authorList>
    </citation>
    <scope>FUNCTION</scope>
    <scope>MUTAGENESIS OF LYS-48 AND THR-175</scope>
    <scope>DISRUPTION PHENOTYPE</scope>
    <scope>INDUCTION BY DCMU</scope>
</reference>
<reference key="18">
    <citation type="journal article" date="2007" name="Trends Plant Sci.">
        <title>SNF1/AMPK/SnRK1 kinases, global regulators at the heart of energy control?</title>
        <authorList>
            <person name="Polge C."/>
            <person name="Thomas M."/>
        </authorList>
    </citation>
    <scope>REVIEW</scope>
</reference>
<reference key="19">
    <citation type="journal article" date="2008" name="Plant Cell">
        <title>Characterization of Arabidopsis and rice DWD proteins and their roles as substrate receptors for CUL4-RING E3 ubiquitin ligases.</title>
        <authorList>
            <person name="Lee J.H."/>
            <person name="Terzaghi W."/>
            <person name="Gusmaroli G."/>
            <person name="Charron J.B."/>
            <person name="Yoon H.J."/>
            <person name="Chen H."/>
            <person name="He Y.J."/>
            <person name="Xiong Y."/>
            <person name="Deng X.W."/>
        </authorList>
    </citation>
    <scope>UBIQUITINATION</scope>
</reference>
<reference key="20">
    <citation type="journal article" date="2008" name="Plant Physiol.">
        <title>Interaction of the WD40 domain of a myoinositol polyphosphate 5-phosphatase with SnRK1 links inositol, sugar, and stress signaling.</title>
        <authorList>
            <person name="Ananieva E.A."/>
            <person name="Gillaspy G.E."/>
            <person name="Ely A."/>
            <person name="Burnette R.N."/>
            <person name="Erickson F.L."/>
        </authorList>
    </citation>
    <scope>INTERACTION WITH 5PTASE13</scope>
    <scope>SUBCELLULAR LOCATION</scope>
</reference>
<reference key="21">
    <citation type="journal article" date="2009" name="Plant J.">
        <title>SnRK1 (SNF1-related kinase 1) has a central role in sugar and ABA signalling in Arabidopsis thaliana.</title>
        <authorList>
            <person name="Jossier M."/>
            <person name="Bouly J.P."/>
            <person name="Meimoun P."/>
            <person name="Arjmand A."/>
            <person name="Lessard P."/>
            <person name="Hawley S."/>
            <person name="Grahame Hardie D."/>
            <person name="Thomas M."/>
        </authorList>
    </citation>
    <scope>INDUCTION BY GLUCOSE</scope>
    <scope>PHOSPHORYLATION AT THR-175</scope>
</reference>
<reference key="22">
    <citation type="journal article" date="2009" name="Plant Physiol.">
        <title>Inhibition of SNF1-related protein kinase1 activity and regulation of metabolic pathways by trehalose-6-phosphate.</title>
        <authorList>
            <person name="Zhang Y."/>
            <person name="Primavesi L.F."/>
            <person name="Jhurreea D."/>
            <person name="Andralojc P.J."/>
            <person name="Mitchell R.A."/>
            <person name="Powers S.J."/>
            <person name="Schluepmann H."/>
            <person name="Delatte T."/>
            <person name="Wingler A."/>
            <person name="Paul M.J."/>
        </authorList>
    </citation>
    <scope>ACTIVITY REGULATION</scope>
</reference>
<reference key="23">
    <citation type="journal article" date="2009" name="Plant Physiol.">
        <title>SnRK1 isoforms AKIN10 and AKIN11 are differentially regulated in Arabidopsis plants under phosphate starvation.</title>
        <authorList>
            <person name="Fragoso S."/>
            <person name="Espindola L."/>
            <person name="Paez-Valencia J."/>
            <person name="Gamboa A."/>
            <person name="Camacho Y."/>
            <person name="Martinez-Barajas E."/>
            <person name="Coello P."/>
        </authorList>
    </citation>
    <scope>SUBCELLULAR LOCATION</scope>
    <scope>DISRUPTION PHENOTYPE</scope>
</reference>
<reference key="24">
    <citation type="journal article" date="2009" name="Plant Physiol.">
        <title>Large-scale Arabidopsis phosphoproteome profiling reveals novel chloroplast kinase substrates and phosphorylation networks.</title>
        <authorList>
            <person name="Reiland S."/>
            <person name="Messerli G."/>
            <person name="Baerenfaller K."/>
            <person name="Gerrits B."/>
            <person name="Endler A."/>
            <person name="Grossmann J."/>
            <person name="Gruissem W."/>
            <person name="Baginsky S."/>
        </authorList>
    </citation>
    <scope>IDENTIFICATION BY MASS SPECTROMETRY [LARGE SCALE ANALYSIS]</scope>
</reference>
<reference key="25">
    <citation type="journal article" date="2009" name="Plant Physiol.">
        <title>Arabidopsis protein kinases GRIK1 and GRIK2 specifically activate SnRK1 by phosphorylating its activation loop.</title>
        <authorList>
            <person name="Shen W."/>
            <person name="Reyes M.I."/>
            <person name="Hanley-Bowdoin L."/>
        </authorList>
    </citation>
    <scope>PHOSPHORYLATION AT THR-175</scope>
    <scope>MUTAGENESIS OF THR-175</scope>
    <scope>ACTIVITY REGULATION</scope>
</reference>
<reference key="26">
    <citation type="journal article" date="2009" name="Plant Sci.">
        <title>NAC domain transcription factor ATAF1 interacts with SNF1-related kinases and silencing of its subfamily causes severe developmental defects in Arabidopsis.</title>
        <authorList>
            <person name="Kleinow T."/>
            <person name="Himbert S."/>
            <person name="Krenz B."/>
            <person name="Jeske H."/>
            <person name="Koncz C."/>
        </authorList>
    </citation>
    <scope>INTERACTION WITH ATAF1</scope>
</reference>
<reference key="27">
    <citation type="journal article" date="2010" name="J. Biol. Chem.">
        <title>Cross-phosphorylation between Arabidopsis thaliana sucrose nonfermenting 1-related protein kinase 1 (AtSnRK1) and its activating kinase (AtSnAK) determines their catalytic activities.</title>
        <authorList>
            <person name="Crozet P."/>
            <person name="Jammes F."/>
            <person name="Valot B."/>
            <person name="Ambard-Bretteville F."/>
            <person name="Nessler S."/>
            <person name="Hodges M."/>
            <person name="Vidal J."/>
            <person name="Thomas M."/>
        </authorList>
    </citation>
    <scope>FUNCTION</scope>
    <scope>MUTAGENESIS OF THR-175</scope>
</reference>
<reference key="28">
    <citation type="journal article" date="2010" name="Proc. Natl. Acad. Sci. U.S.A.">
        <title>Proteome-wide screens for small ubiquitin-like modifier (SUMO) substrates identify Arabidopsis proteins implicated in diverse biological processes.</title>
        <authorList>
            <person name="Elrouby N."/>
            <person name="Coupland G."/>
        </authorList>
    </citation>
    <scope>INTERACTION WITH SCE1 AND ESD4</scope>
    <scope>SUMOYLATION</scope>
</reference>
<reference key="29">
    <citation type="journal article" date="2010" name="Plant Signal. Behav.">
        <title>beta-aminobutyric acid priming by stress imprinting.</title>
        <authorList>
            <person name="Singh P."/>
            <person name="Wu C.C."/>
            <person name="Zimmerli L."/>
        </authorList>
    </citation>
    <scope>INDUCTION BY BABA</scope>
</reference>
<reference key="30">
    <citation type="journal article" date="2011" name="Plant J.">
        <title>BAC-recombineering for studying plant gene regulation: developmental control and cellular localization of SnRK1 kinase subunits.</title>
        <authorList>
            <person name="Bitrian M."/>
            <person name="Roodbarkelari F."/>
            <person name="Horvath M."/>
            <person name="Koncz C."/>
        </authorList>
    </citation>
    <scope>SUBCELLULAR LOCATION</scope>
    <scope>INTERACTION WITH SNF4</scope>
</reference>
<reference key="31">
    <citation type="journal article" date="2012" name="FEBS Lett.">
        <title>A putative myristoylated 2C-type protein phosphatase, PP2C74, interacts with SnRK1 in Arabidopsis.</title>
        <authorList>
            <person name="Tsugama D."/>
            <person name="Liu S."/>
            <person name="Takano T."/>
        </authorList>
    </citation>
    <scope>INTERACTION WITH PP2C74</scope>
</reference>
<reference key="32">
    <citation type="journal article" date="2012" name="Plant J.">
        <title>AKIN10 and FUSCA3 interact to control lateral organ development and phase transitions in Arabidopsis.</title>
        <authorList>
            <person name="Tsai A.Y."/>
            <person name="Gazzarrini S."/>
        </authorList>
    </citation>
    <scope>INTERACTION WITH FUS3</scope>
    <scope>FUNCTION</scope>
</reference>
<reference key="33">
    <citation type="journal article" date="2012" name="Plant Physiol.">
        <title>Regulatory functions of SnRK1 in stress-responsive gene expression and in plant growth and development.</title>
        <authorList>
            <person name="Cho Y.H."/>
            <person name="Hong J.W."/>
            <person name="Kim E.C."/>
            <person name="Yoo S.D."/>
        </authorList>
    </citation>
    <scope>INDUCTION BY HYPOXIA</scope>
</reference>
<reference key="34">
    <citation type="journal article" date="2012" name="Plant Signal. Behav.">
        <title>Overlapping and distinct roles of AKIN10 and FUSCA3 in ABA and sugar signaling during seed germination.</title>
        <authorList>
            <person name="Tsai A.Y."/>
            <person name="Gazzarrini S."/>
        </authorList>
    </citation>
    <scope>FUNCTION</scope>
</reference>
<reference key="35">
    <citation type="journal article" date="2013" name="J. Biol. Chem.">
        <title>Cyclin-dependent kinase E1 (CDKE1) provides a cellular switch in plants between growth and stress responses.</title>
        <authorList>
            <person name="Ng S."/>
            <person name="Giraud E."/>
            <person name="Duncan O."/>
            <person name="Law S.R."/>
            <person name="Wang Y."/>
            <person name="Xu L."/>
            <person name="Narsai R."/>
            <person name="Carrie C."/>
            <person name="Walker H."/>
            <person name="Day D.A."/>
            <person name="Blanco N.E."/>
            <person name="Strand A."/>
            <person name="Whelan J."/>
            <person name="Ivanova A."/>
        </authorList>
    </citation>
    <scope>INTERACTION WITH CDKE1</scope>
    <scope>SUBCELLULAR LOCATION</scope>
</reference>
<reference key="36">
    <citation type="journal article" date="2013" name="Plant Cell">
        <title>ABI1 and PP2CA phosphatases are negative regulators of Snf1-related protein kinase1 signaling in Arabidopsis.</title>
        <authorList>
            <person name="Rodrigues A."/>
            <person name="Adamo M."/>
            <person name="Crozet P."/>
            <person name="Margalha L."/>
            <person name="Confraria A."/>
            <person name="Martinho C."/>
            <person name="Elias A."/>
            <person name="Rabissi A."/>
            <person name="Lumbreras V."/>
            <person name="Gonzalez-Guzman M."/>
            <person name="Antoni R."/>
            <person name="Rodriguez P.L."/>
            <person name="Baena-Gonzalez E."/>
        </authorList>
    </citation>
    <scope>INTERACTION WITH ABI1 AND PP2CA</scope>
    <scope>DOMAIN</scope>
    <scope>PHOSPHORYLATION AT THR-175</scope>
    <scope>ACTIVITY REGULATION</scope>
</reference>
<reference key="37">
    <citation type="journal article" date="2013" name="Plant J.">
        <title>Phosphorylation of p27(KIP1) homologs KRP6 and 7 by SNF1-related protein kinase-1 links plant energy homeostasis and cell proliferation.</title>
        <authorList>
            <person name="Guerinier T."/>
            <person name="Millan L."/>
            <person name="Crozet P."/>
            <person name="Oury C."/>
            <person name="Rey F."/>
            <person name="Valot B."/>
            <person name="Mathieu C."/>
            <person name="Vidal J."/>
            <person name="Hodges M."/>
            <person name="Thomas M."/>
            <person name="Glab N."/>
        </authorList>
    </citation>
    <scope>FUNCTION</scope>
    <scope>INTERACTION WITH KRP6</scope>
</reference>
<reference key="38">
    <citation type="journal article" date="2014" name="Biochem. Biophys. Res. Commun.">
        <title>Arabidopsis CIPK14 positively regulates glucose response.</title>
        <authorList>
            <person name="Yan J."/>
            <person name="Niu F."/>
            <person name="Liu W.Z."/>
            <person name="Zhang H."/>
            <person name="Wang B."/>
            <person name="Lan W."/>
            <person name="Che Y."/>
            <person name="Yang B."/>
            <person name="Luan S."/>
            <person name="Jiang Y.Q."/>
        </authorList>
    </citation>
    <scope>INTERACTION WITH CIPK14</scope>
</reference>
<reference key="39">
    <citation type="journal article" date="2014" name="Front. Plant Sci.">
        <title>The complex becomes more complex: protein-protein interactions of SnRK1 with DUF581 family proteins provide a framework for cell- and stimulus type-specific SnRK1 signaling in plants.</title>
        <authorList>
            <person name="Nietzsche M."/>
            <person name="Schiessl I."/>
            <person name="Boernke F."/>
        </authorList>
    </citation>
    <scope>INTERACTION WITH FLZ PROTEINS</scope>
    <scope>INTERACTION WITH GEBP</scope>
    <scope>SUBCELLULAR LOCATION</scope>
</reference>
<reference key="40">
    <citation type="journal article" date="2014" name="Front. Plant Sci.">
        <title>Corrigendum: The complex becomes more complex: protein-protein interactions of SnRK1 with DUF581 family proteins provide a framework for cell- and stimulus type-specific SnRK1 signaling in plants.</title>
        <authorList>
            <person name="Boernke F."/>
        </authorList>
    </citation>
    <scope>ERRATUM OF PUBMED:24600465</scope>
</reference>
<reference key="41">
    <citation type="journal article" date="2014" name="Front. Plant Sci.">
        <title>Regulation of sucrose non-fermenting related kinase 1 genes in Arabidopsis thaliana.</title>
        <authorList>
            <person name="Williams S.P."/>
            <person name="Rangarajan P."/>
            <person name="Donahue J.L."/>
            <person name="Hess J.E."/>
            <person name="Gillaspy G.E."/>
        </authorList>
    </citation>
    <scope>TISSUE SPECIFICITY</scope>
    <scope>ALTERNATIVE SPLICING</scope>
</reference>
<reference key="42">
    <citation type="journal article" date="2014" name="J. Plant Biol.">
        <title>Master regulators in plant glucose signaling networks.</title>
        <authorList>
            <person name="Sheen J."/>
        </authorList>
    </citation>
    <scope>REVIEW</scope>
</reference>
<reference key="43">
    <citation type="journal article" date="2014" name="J. Virol.">
        <title>SnRK1 phosphorylation of AL2 delays Cabbage leaf curl virus infection in Arabidopsis.</title>
        <authorList>
            <person name="Shen W."/>
            <person name="Dallas M.B."/>
            <person name="Goshe M.B."/>
            <person name="Hanley-Bowdoin L."/>
        </authorList>
    </citation>
    <scope>FUNCTION</scope>
</reference>
<reference key="44">
    <citation type="journal article" date="2014" name="Plant Cell Environ.">
        <title>Inverse modulation of the energy sensor Snf1-related protein kinase 1 on hypoxia adaptation and salt stress tolerance in Arabidopsis thaliana.</title>
        <authorList>
            <person name="Im J.H."/>
            <person name="Cho Y.H."/>
            <person name="Kim G.D."/>
            <person name="Kang G.H."/>
            <person name="Hong J.W."/>
            <person name="Yoo S.D."/>
        </authorList>
    </citation>
    <scope>INTERACTION WITH MYC2</scope>
    <scope>FUNCTION</scope>
</reference>
<reference key="45">
    <citation type="journal article" date="2015" name="BMC Plant Biol.">
        <title>AKIN10 delays flowering by inactivating IDD8 transcription factor through protein phosphorylation in Arabidopsis.</title>
        <authorList>
            <person name="Jeong E.-Y."/>
            <person name="Seo P.J."/>
            <person name="Woo J.C."/>
            <person name="Park C.-M."/>
        </authorList>
    </citation>
    <scope>FUNCTION</scope>
    <scope>INTERACTION WITH IDD8</scope>
    <scope>PHOSPHORYLATION</scope>
    <scope>SUBCELLULAR LOCATION</scope>
    <source>
        <strain>cv. Columbia</strain>
    </source>
</reference>
<reference key="46">
    <citation type="journal article" date="2015" name="Elife">
        <title>SnRK1-triggered switch of bZIP63 dimerization mediates the low-energy response in plants.</title>
        <authorList>
            <person name="Mair A."/>
            <person name="Pedrotti L."/>
            <person name="Wurzinger B."/>
            <person name="Anrather D."/>
            <person name="Simeunovic A."/>
            <person name="Weiste C."/>
            <person name="Valerio C."/>
            <person name="Dietrich K."/>
            <person name="Kirchler T."/>
            <person name="Naegele T."/>
            <person name="Vicente Carbajosa J."/>
            <person name="Hanson J."/>
            <person name="Baena-Gonzalez E."/>
            <person name="Chaban C."/>
            <person name="Weckwerth W."/>
            <person name="Droege-Laser W."/>
            <person name="Teige M."/>
        </authorList>
    </citation>
    <scope>IDENTIFICATION BY MASS SPECTROMETRY</scope>
    <scope>INTERACTION WITH BZIP63</scope>
    <scope>FUNCTION</scope>
</reference>
<reference key="47">
    <citation type="journal article" date="2015" name="J. Exp. Bot.">
        <title>PETAL LOSS, a trihelix transcription factor that represses growth in Arabidopsis thaliana, binds the energy-sensing SnRK1 kinase AKIN10.</title>
        <authorList>
            <person name="O'Brien M."/>
            <person name="Kaplan-Levy R.N."/>
            <person name="Quon T."/>
            <person name="Sappl P.G."/>
            <person name="Smyth D.R."/>
        </authorList>
    </citation>
    <scope>INTERACTION WITH PTL</scope>
    <scope>TISSUE SPECIFICITY</scope>
    <scope>SUBCELLULAR LOCATION</scope>
</reference>
<reference key="48">
    <citation type="journal article" date="2015" name="Plant J.">
        <title>SnRK1 from Arabidopsis thaliana is an atypical AMPK.</title>
        <authorList>
            <person name="Emanuelle S."/>
            <person name="Hossain M.I."/>
            <person name="Moller I.E."/>
            <person name="Pedersen H.L."/>
            <person name="van de Meene A.M."/>
            <person name="Doblin M.S."/>
            <person name="Koay A."/>
            <person name="Oakhill J.S."/>
            <person name="Scott J.W."/>
            <person name="Willats W.G."/>
            <person name="Kemp B.E."/>
            <person name="Bacic A."/>
            <person name="Gooley P.R."/>
            <person name="Stapleton D.I."/>
        </authorList>
    </citation>
    <scope>COMPONENT OF A HETEROTRIMERIC COMPLEX</scope>
    <scope>SUBUNIT</scope>
</reference>
<reference key="49">
    <citation type="journal article" date="2015" name="Plant Physiol.">
        <title>Changes in the phosphoproteome and metabolome link early signaling events to rearrangement of photosynthesis and central metabolism in salinity and oxidative stress response in Arabidopsis.</title>
        <authorList>
            <person name="Chen Y."/>
            <person name="Hoehenwarter W."/>
        </authorList>
    </citation>
    <scope>IDENTIFICATION BY MASS SPECTROMETRY</scope>
    <scope>PHOSPHORYLATION AT SER-364</scope>
    <scope>INDUCTION BY SALT AND OXIDATIVE STRESSES</scope>
</reference>
<reference key="50">
    <citation type="journal article" date="2016" name="Curr. Plant Biol.">
        <title>A protein-protein interaction network linking the energy-sensor kinase SnRK1 to multiple signaling pathways in Arabidopsis thaliana.</title>
        <authorList>
            <person name="Nietzsche M."/>
            <person name="Landgraf R."/>
            <person name="Tohge T."/>
            <person name="Boernke F."/>
        </authorList>
    </citation>
    <scope>INTERACTION WITH FLZ3; FLZ9; TCP3; TCP13; HB21 AND HB23</scope>
</reference>
<reference key="51">
    <citation type="journal article" date="2016" name="EXS">
        <title>Plant SnRK1 kinases: structure, regulation, and function.</title>
        <authorList>
            <person name="Margalha L."/>
            <person name="Valerio C."/>
            <person name="Baena-Gonzalez E."/>
        </authorList>
    </citation>
    <scope>REVIEW</scope>
</reference>
<reference key="52">
    <citation type="journal article" date="2016" name="J. Exp. Bot.">
        <title>Quantitative phosphoproteomics of protein kinase SnRK1 regulated protein phosphorylation in Arabidopsis under submergence.</title>
        <authorList>
            <person name="Cho H.Y."/>
            <person name="Wen T.N."/>
            <person name="Wang Y.T."/>
            <person name="Shih M.C."/>
        </authorList>
    </citation>
    <scope>PHOSPHORYLATION AT THR-175</scope>
    <scope>MUTAGENESIS OF LYS-48 AND THR-175</scope>
    <scope>FUNCTION</scope>
    <scope>INTERACTION WITH PTP1</scope>
</reference>
<reference key="53">
    <citation type="journal article" date="2016" name="Plant Cell">
        <title>The Arabidopsis SR45 splicing factor, a negative regulator of sugar signaling, modulates SNF1-related protein kinase 1 stability.</title>
        <authorList>
            <person name="Carvalho R.F."/>
            <person name="Szakonyi D."/>
            <person name="Simpson C.G."/>
            <person name="Barbosa I.C."/>
            <person name="Brown J.W."/>
            <person name="Baena-Gonzalez E."/>
            <person name="Duque P."/>
        </authorList>
    </citation>
    <scope>ACTIVITY REGULATION</scope>
    <scope>DISRUPTION PHENOTYPE</scope>
</reference>
<reference key="54">
    <citation type="journal article" date="2016" name="Plant J.">
        <title>SUMOylation represses SnRK1 signaling in Arabidopsis.</title>
        <authorList>
            <person name="Crozet P."/>
            <person name="Margalha L."/>
            <person name="Butowt R."/>
            <person name="Fernandes N."/>
            <person name="Elias C.A."/>
            <person name="Orosa B."/>
            <person name="Tomanov K."/>
            <person name="Teige M."/>
            <person name="Bachmair A."/>
            <person name="Sadanandom A."/>
            <person name="Baena-Gonzalez E."/>
        </authorList>
    </citation>
    <scope>SUMOYLATION AT LYS-34; LYS-63 AND LYS-390</scope>
    <scope>INTERACTION WITH SCE1</scope>
    <scope>MUTAGENESIS OF LYS-34; LYS-63 AND LYS-390</scope>
    <scope>UBIQUITINATION</scope>
    <scope>FUNCTION</scope>
</reference>
<reference key="55">
    <citation type="journal article" date="2016" name="Sci. Rep.">
        <title>Quantitative phosphoproteomics reveals the role of the AMPK plant ortholog SnRK1 as a metabolic master regulator under energy deprivation.</title>
        <authorList>
            <person name="Nukarinen E."/>
            <person name="Naegele T."/>
            <person name="Pedrotti L."/>
            <person name="Wurzinger B."/>
            <person name="Mair A."/>
            <person name="Landgraf R."/>
            <person name="Boernke F."/>
            <person name="Hanson J."/>
            <person name="Teige M."/>
            <person name="Baena-Gonzalez E."/>
            <person name="Droege-Laser W."/>
            <person name="Weckwerth W."/>
        </authorList>
    </citation>
    <scope>INTERACTION WITH RAPTOR1B</scope>
    <scope>FUNCTION</scope>
    <scope>IDENTIFICATION BY MASS SPECTROMETRY</scope>
    <scope>PHOSPHORYLATION AT THR-175</scope>
    <scope>SUBCELLULAR LOCATION</scope>
</reference>
<reference key="56">
    <citation type="journal article" date="2016" name="Trends Plant Sci.">
        <title>The SnRK1 energy sensor in plant biotic interactions.</title>
        <authorList>
            <person name="Hulsmans S."/>
            <person name="Rodriguez M."/>
            <person name="De Coninck B."/>
            <person name="Rolland F."/>
        </authorList>
    </citation>
    <scope>REVIEW</scope>
</reference>
<reference key="57">
    <citation type="journal article" date="2017" name="FEBS Lett.">
        <title>AKIN10, a representative Arabidopsis SNF1-related protein kinase 1 (SnRK1), phosphorylates and downregulates plant HMG-CoA reductase.</title>
        <authorList>
            <person name="Robertlee J."/>
            <person name="Kobayashi K."/>
            <person name="Suzuki M."/>
            <person name="Muranaka T."/>
        </authorList>
    </citation>
    <scope>FUNCTION</scope>
</reference>
<reference key="58">
    <citation type="journal article" date="2017" name="FEBS Lett.">
        <title>Redox state-dependent modulation of plant SnRK1 kinase activity differs from AMPK regulation in animals.</title>
        <authorList>
            <person name="Wurzinger B."/>
            <person name="Mair A."/>
            <person name="Fischer-Schrader K."/>
            <person name="Nukarinen E."/>
            <person name="Roustan V."/>
            <person name="Weckwerth W."/>
            <person name="Teige M."/>
        </authorList>
    </citation>
    <scope>FUNCTION</scope>
    <scope>MUTAGENESIS OF CYS-133 AND CYS-177</scope>
    <scope>SUBUNIT</scope>
    <scope>ACTIVITY REGULATION</scope>
</reference>
<reference key="59">
    <citation type="journal article" date="2017" name="Front. Plant Sci.">
        <title>The AMP-activated protein kinase KIN10 is involved in the regulation of autophagy in Arabidopsis.</title>
        <authorList>
            <person name="Chen L."/>
            <person name="Su Z.Z."/>
            <person name="Huang L."/>
            <person name="Xia F.N."/>
            <person name="Qi H."/>
            <person name="Xie L.J."/>
            <person name="Xiao S."/>
            <person name="Chen Q.F."/>
        </authorList>
    </citation>
    <scope>FUNCTION</scope>
</reference>
<reference key="60">
    <citation type="journal article" date="2017" name="J. Exp. Bot.">
        <title>SnRK1 phosphorylation of FUSCA3 positively regulates embryogenesis, seed yield, and plant growth at high temperature in Arabidopsis.</title>
        <authorList>
            <person name="Chan A."/>
            <person name="Carianopol C."/>
            <person name="Tsai A.Y."/>
            <person name="Varathanajah K."/>
            <person name="Chiu R.S."/>
            <person name="Gazzarrini S."/>
        </authorList>
    </citation>
    <scope>DEVELOPMENTAL STAGE</scope>
    <scope>FUNCTION</scope>
    <scope>DISRUPTION PHENOTYPE</scope>
</reference>
<reference key="61">
    <citation type="journal article" date="2017" name="J. Exp. Bot.">
        <title>Corrigendum: SnRK1 phosphorylation of FUSCA3 positively regulates embryogenesis, seed yield, and plant growth at high temperature in Arabidopsis.</title>
        <authorList>
            <person name="Chan A."/>
            <person name="Carianopol C."/>
            <person name="Tsai A.Y."/>
            <person name="Varatharajah K."/>
            <person name="Chiu R.S."/>
            <person name="Gazzarrini S."/>
        </authorList>
    </citation>
    <scope>ERRATUM OF PUBMED:28922765</scope>
</reference>
<reference key="62">
    <citation type="journal article" date="2017" name="Plant Cell">
        <title>Phosphorylation of WRINKLED1 by KIN10 results in its proteasomal degradation, providing a link between energy homeostasis and lipid biosynthesis.</title>
        <authorList>
            <person name="Zhai Z."/>
            <person name="Liu H."/>
            <person name="Shanklin J."/>
        </authorList>
    </citation>
    <scope>FUNCTION</scope>
    <scope>INTERACTION WITH WRI1</scope>
</reference>
<reference key="63">
    <citation type="journal article" date="2017" name="PLoS ONE">
        <title>SnRK1 activates autophagy via the TOR signaling pathway in Arabidopsis thaliana.</title>
        <authorList>
            <person name="Soto-Burgos J."/>
            <person name="Bassham D.C."/>
        </authorList>
    </citation>
    <scope>FUNCTION</scope>
    <scope>DISRUPTION PHENOTYPE</scope>
</reference>
<reference key="64">
    <citation type="journal article" date="2017" name="Sci. Rep.">
        <title>Regulatory functions of cellular energy sensor SNF1-related kinase1 for leaf senescence delay through ETHYLENE- INSENSITIVE3 repression.</title>
        <authorList>
            <person name="Kim G.D."/>
            <person name="Cho Y.H."/>
            <person name="Yoo S.D."/>
        </authorList>
    </citation>
    <scope>INTERACTION WITH EIN3</scope>
    <scope>FUNCTION</scope>
</reference>
<reference key="65">
    <citation type="journal article" date="2018" name="J. Biol. Chem.">
        <title>The FCS-like zinc finger scaffold of the kinase SnRK1 is formed by the coordinated actions of the FLZ domain and intrinsically disordered regions.</title>
        <authorList>
            <person name="Jamsheer K M."/>
            <person name="Shukla B.N."/>
            <person name="Jindal S."/>
            <person name="Gopan N."/>
            <person name="Mannully C.T."/>
            <person name="Laxmi A."/>
        </authorList>
    </citation>
    <scope>INTERACTION WITH FLZ PROTEINS</scope>
</reference>
<reference key="66">
    <citation type="journal article" date="2018" name="Plant Cell">
        <title>Snf1-RELATED KINASE1-controlled C/S1-bZIP signaling activates alternative mitochondrial metabolic pathways to ensure plant survival in extended darkness.</title>
        <authorList>
            <person name="Pedrotti L."/>
            <person name="Weiste C."/>
            <person name="Naegele T."/>
            <person name="Wolf E."/>
            <person name="Lorenzin F."/>
            <person name="Dietrich K."/>
            <person name="Mair A."/>
            <person name="Weckwerth W."/>
            <person name="Teige M."/>
            <person name="Baena-Gonzalez E."/>
            <person name="Droege-Laser W."/>
        </authorList>
    </citation>
    <scope>FUNCTION</scope>
    <scope>INTERACTION WITH BZIP2 AND BZIP63</scope>
</reference>
<reference key="67">
    <citation type="journal article" date="2018" name="Plant Cell Physiol.">
        <title>The role of Arabidopsis inositol polyphosphate kinase AtIPK2beta in glucose suppression of seed germination and seedling development.</title>
        <authorList>
            <person name="Yang Q."/>
            <person name="Sang S."/>
            <person name="Chen Y."/>
            <person name="Wei Z."/>
            <person name="Wang P."/>
        </authorList>
    </citation>
    <scope>INTERACTION WITH IPK2B</scope>
    <scope>FUNCTION</scope>
</reference>
<reference key="68">
    <citation type="journal article" date="2018" name="Plant J.">
        <title>FCS-like zinc finger 6 and 10 repress SnRK1 signalling in Arabidopsis.</title>
        <authorList>
            <person name="Jamsheer K M."/>
            <person name="Sharma M."/>
            <person name="Singh D."/>
            <person name="Mannully C.T."/>
            <person name="Jindal S."/>
            <person name="Shukla B.N."/>
            <person name="Laxmi A."/>
        </authorList>
    </citation>
    <scope>INTERACTION WITH FLZ6 AND FLZ10</scope>
    <scope>SUBCELLULAR LOCATION</scope>
    <scope>ACTIVITY REGULATION</scope>
</reference>
<reference key="69">
    <citation type="journal article" date="2018" name="Plant Physiol.">
        <title>The energy-signaling hub SnRK1 is important for sucrose-induced hypocotyl elongation.</title>
        <authorList>
            <person name="Simon N.M.L."/>
            <person name="Kusakina J."/>
            <person name="Fernandez-Lopez A."/>
            <person name="Chembath A."/>
            <person name="Belbin F.E."/>
            <person name="Dodd A.N."/>
        </authorList>
    </citation>
    <scope>FUNCTION</scope>
</reference>
<reference key="70">
    <citation type="journal article" date="2018" name="Plant Physiol.">
        <title>STOREKEEPER RELATED1/G-element binding protein (STKR1) interacts with protein kinase SnRK1.</title>
        <authorList>
            <person name="Nietzsche M."/>
            <person name="Guerra T."/>
            <person name="Alseekh S."/>
            <person name="Wiermer M."/>
            <person name="Sonnewald S."/>
            <person name="Fernie A.R."/>
            <person name="Boernke F."/>
        </authorList>
    </citation>
    <scope>INTERACTION WITH GEBP</scope>
</reference>
<reference key="71">
    <citation type="journal article" date="2018" name="Plant Signal. Behav.">
        <title>Involvement of the SnRK1 subunit KIN10 in sucrose-induced hypocotyl elongation.</title>
        <authorList>
            <person name="Simon N.M.L."/>
            <person name="Sawkins E."/>
            <person name="Dodd A.N."/>
        </authorList>
    </citation>
    <scope>FUNCTION</scope>
    <scope>DISRUPTION PHENOTYPE</scope>
</reference>
<gene>
    <name evidence="61" type="primary">KIN10</name>
    <name evidence="67" type="synonym">AK21</name>
    <name evidence="63 66" type="synonym">AKIN10</name>
    <name evidence="68" type="synonym">SKIN10</name>
    <name evidence="65" type="synonym">SNR2</name>
    <name evidence="60" type="synonym">SNRK1.1</name>
    <name evidence="62" type="ordered locus">At3g01090</name>
    <name evidence="64" type="ORF">T4P13.22</name>
</gene>
<proteinExistence type="evidence at protein level"/>
<comment type="function">
    <text evidence="6 8 12 19 23 26 28 31 32 37 38 40 41 43 44 45 46 47 48 49 50 51 53 54 56">Catalytic subunit of the probable trimeric SNF1-related protein kinase (SnRK) complex, a central regulator of cellular energy homeostasis, which, in response to seemingly unrelated darkness, sugar and stress conditions, activates energy-producing pathways and inhibits energy-consuming processes. May play a role in a signal transduction cascade regulating gene expression and carbohydrate metabolism in higher plants. The SnRK complex may also be involved in the regulation of fatty acid synthesis by phosphorylation of acetyl-CoA carboxylase and in assimilation of nitrogen by phosphorylating nitrate reductase (PubMed:17671505). In vitro, KIN10 exhibits kinase activity on sucrose phosphate synthase and the kinase activity is inhibited by PRL1 (PubMed:10220464). May be a subunit of a SCF ubiquitin ligase complex and thus be involved in proteasomal ubiquitination (PubMed:11387208). Phosphorylates GRIK1/SNAK2 and GRIK2/SNAK1 in vitro (PubMed:20164192). Cooperates with FUS3 to regulate developmental phase transitions and lateral organ development and act both as positive regulators of abscisic acid (ABA) signaling during germination (PubMed:22026387, PubMed:22902692). Phosphorylates FUS3 in embryo (PubMed:28922765). Negatively modulates MYC2 accumulation through its protein phosphorylation (PubMed:24890857). Phosphorylates geminivirus (CaLCuV, TGMV, ToMoV) AL2 protein resulting in a delay in the viral DNA accumulation and symptom appearance during infection (PubMed:24990996). Regulates bZIP63 activity to alter metabolism in response to starvation through its protein phosphorylation (PubMed:26263501). Under sugar deprivation conditions, antagonizes the IDD8 function in flowering time control by its protein phosphorylation (PubMed:25929516). Plays a cardinal role in the control of cell proliferation through inhibition of KRP6 activity by its protein phosphorylation (PubMed:23617622). Under submergence, phosphorylates PTP1, leading to the release of the MPK6 signaling pathway inhibition (PubMed:27029354). Triggers its own SUMO-mediated proteasomal degradation, establishing a negative feedback loop that attenuates SnRK1 signaling and prevents detrimental hyperactivation of stress responses (PubMed:26662259). Phosphorylates RAPTOR1B in vitro (PubMed:27545962). Phosphorylates and down-regulates HMGR1S in vitro (PubMed:28263378). Kinase activity is redox-sensitive (PubMed:28940407). Acts upstream of TOR in the regulation of autophagy. Required for the activation of autophagy by many abiotic stresses (PubMed:28783755). Involved in positive regulation of autophagy, possibly by affecting the phosphorylation of ATG1 proteins (PubMed:28740502). Negatively modulates WRI1 accumulation through its protein phosphorylation (PubMed:28314829). Modulates leaf senescence progression by the negative regulation of EIN3 accumulation through its protein phosphorylation (PubMed:28600557). Under extended darkness, C/S1-bZIP-SnRK1 complex interacts with the histone acetylation machinery to remodel chromatin and facilitate transcription. BZIP2-BZIP63-KIN10 complex binds to the ETFQO promoter to up-regulate its transcription (PubMed:29348240). Phosphorylates and down-regulates IPK2b in vitro (PubMed:29216370). Involved in the regulation of sucrose-induced hypocotyl elongation under light/dark cycles (PubMed:29114081, PubMed:29584583).</text>
</comment>
<comment type="catalytic activity">
    <reaction evidence="6 12">
        <text>L-seryl-[protein] + ATP = O-phospho-L-seryl-[protein] + ADP + H(+)</text>
        <dbReference type="Rhea" id="RHEA:17989"/>
        <dbReference type="Rhea" id="RHEA-COMP:9863"/>
        <dbReference type="Rhea" id="RHEA-COMP:11604"/>
        <dbReference type="ChEBI" id="CHEBI:15378"/>
        <dbReference type="ChEBI" id="CHEBI:29999"/>
        <dbReference type="ChEBI" id="CHEBI:30616"/>
        <dbReference type="ChEBI" id="CHEBI:83421"/>
        <dbReference type="ChEBI" id="CHEBI:456216"/>
        <dbReference type="EC" id="2.7.11.1"/>
    </reaction>
</comment>
<comment type="catalytic activity">
    <reaction evidence="6 12">
        <text>L-threonyl-[protein] + ATP = O-phospho-L-threonyl-[protein] + ADP + H(+)</text>
        <dbReference type="Rhea" id="RHEA:46608"/>
        <dbReference type="Rhea" id="RHEA-COMP:11060"/>
        <dbReference type="Rhea" id="RHEA-COMP:11605"/>
        <dbReference type="ChEBI" id="CHEBI:15378"/>
        <dbReference type="ChEBI" id="CHEBI:30013"/>
        <dbReference type="ChEBI" id="CHEBI:30616"/>
        <dbReference type="ChEBI" id="CHEBI:61977"/>
        <dbReference type="ChEBI" id="CHEBI:456216"/>
        <dbReference type="EC" id="2.7.11.1"/>
    </reaction>
</comment>
<comment type="activity regulation">
    <text evidence="15 18 29 42 50 55">Activated by phosphorylation at Thr-175 by GRIK1/SNAK2 and GRIK2/SNAK1 (PubMed:19339507). Inactivated by dephosphorylation at Thr-175 (PubMed:24179127). Inhibited by trehalose-6-phosphate (PubMed:19193861). Down-regulated by SR45 by affecting its stability (PubMed:27436712). Reduced kinase activity in response to H(2)O(2) treatment. The redox-state of Cys-177 seems to directly influence its kinase activity (PubMed:28940407). Down-regulated by FLZ6 and FLZ10 (PubMed:29406622).</text>
</comment>
<comment type="subunit">
    <text evidence="6 7 8 9 10 11 14 21 22 23 25 27 28 29 30 31 33 35 36 37 38 40 41 43 45 46 50 52 53 54 55 57 58 59">Subunit of a probable heterotrimeric complex consisting of an alpha catalytic (KIN10 or KIN11) subunit, and a beta (KINB) and a gamma (KING or SNF4) non-catalytic regulatory subunits (PubMed:17028154, PubMed:25736509). Interacts with KINB2, KINB3, SNF4 and probably with KINB1 and KING1 (PubMed:10929106, PubMed:11522840, PubMed:15803412, PubMed:17028154, PubMed:21235649). Interacts with SKP1/ASK1, PAD1, the N-terminus of PRL1 and the WD40 domain of 5PTase13 (PubMed:10220464, PubMed:11387208, PubMed:18931139). Potential subunit of a SCF ubiquitin ligase complex consisting of a SNF1-related protein kinase, SKP1 and CUL1. The association of the SCF complex with the proteasome may be mediated by PAD1 and seems to be inhibited by the interaction with PRL1 (PubMed:11387208). Interacts with ATAF1 (Ref.26). Interacts with ESD4 (PubMed:20855607). Interacts with SCE1 (PubMed:20855607, PubMed:26662259). Interacts with FUS3 (PubMed:22026387). Interacts with PP2C74 (PubMed:22449965). Interacts with CDKE1 (PubMed:23229550). Interacts with ABI1 and PP2CA (PubMed:24179127). Interacts with KRP6 (PubMed:23617622). Interacts with CIPK14 (PubMed:25058458). Interacts with FLZ proteins through their FLZ-type zinc finger domains (PubMed:24600465, PubMed:29945970). Interacts with GEBP/STKR1 (PubMed:24600465, PubMed:29192025). Interacts with MYC2 (PubMed:24890857). Interacts with IDD8 (PubMed:25929516). Interacts with BZIP63 (PubMed:26263501). Interacts with PTL (PubMed:25697797). Interacts with FLZ3, FLZ9, TCP3, TCP13, HB21/ZHD3 and HB23/ZHD10 (Ref.50). Interacts with PTP1 (PubMed:27029354). Interacts with RAPTOR1B (PubMed:27545962). Forms oligomers in vitro under strongly reducing conditions (PubMed:28940407). Interacts with WRI1 (PubMed:28314829). Interacts with EIN3 (PubMed:28600557). Component of a ternary complex composed of BZIP2-BZIP63 heterodimer and KIN10 (PubMed:29348240). Interacts with IPK2b (PubMed:29216370). Interacts with FLZ6 and FLZ10 (PubMed:29406622).</text>
</comment>
<comment type="interaction">
    <interactant intactId="EBI-2107143">
        <id>Q38997</id>
    </interactant>
    <interactant intactId="EBI-4439342">
        <id>Q8VY80</id>
        <label>FLZ5</label>
    </interactant>
    <organismsDiffer>false</organismsDiffer>
    <experiments>3</experiments>
</comment>
<comment type="interaction">
    <interactant intactId="EBI-2107143">
        <id>Q38997</id>
    </interactant>
    <interactant intactId="EBI-25519488">
        <id>Q9SZU7</id>
        <label>KAI2</label>
    </interactant>
    <organismsDiffer>false</organismsDiffer>
    <experiments>3</experiments>
</comment>
<comment type="interaction">
    <interactant intactId="EBI-2107143">
        <id>Q38997</id>
    </interactant>
    <interactant intactId="EBI-2042436">
        <id>Q9SCY5</id>
        <label>KINB2</label>
    </interactant>
    <organismsDiffer>false</organismsDiffer>
    <experiments>20</experiments>
</comment>
<comment type="interaction">
    <interactant intactId="EBI-2107143">
        <id>Q38997</id>
    </interactant>
    <interactant intactId="EBI-59033124">
        <id>O22864</id>
        <label>NLP8</label>
    </interactant>
    <organismsDiffer>false</organismsDiffer>
    <experiments>3</experiments>
</comment>
<comment type="interaction">
    <interactant intactId="EBI-2107143">
        <id>Q38997</id>
    </interactant>
    <interactant intactId="EBI-2356879">
        <id>Q8L5Y9</id>
        <label>PANK2</label>
    </interactant>
    <organismsDiffer>false</organismsDiffer>
    <experiments>4</experiments>
</comment>
<comment type="interaction">
    <interactant intactId="EBI-2107143">
        <id>Q38997</id>
    </interactant>
    <interactant intactId="EBI-8519789">
        <id>O23657</id>
        <label>RABC1</label>
    </interactant>
    <organismsDiffer>false</organismsDiffer>
    <experiments>2</experiments>
</comment>
<comment type="interaction">
    <interactant intactId="EBI-2107143">
        <id>Q38997</id>
    </interactant>
    <interactant intactId="EBI-2360649">
        <id>Q944A6</id>
        <label>SNF4</label>
    </interactant>
    <organismsDiffer>false</organismsDiffer>
    <experiments>17</experiments>
</comment>
<comment type="interaction">
    <interactant intactId="EBI-2107143">
        <id>Q38997</id>
    </interactant>
    <interactant intactId="EBI-59034360">
        <id>Q39221</id>
        <label>STL2P</label>
    </interactant>
    <organismsDiffer>false</organismsDiffer>
    <experiments>2</experiments>
</comment>
<comment type="interaction">
    <interactant intactId="EBI-20798606">
        <id>Q38997-2</id>
    </interactant>
    <interactant intactId="EBI-6399184">
        <id>Q93V58</id>
        <label>GRIK1</label>
    </interactant>
    <organismsDiffer>false</organismsDiffer>
    <experiments>2</experiments>
</comment>
<comment type="interaction">
    <interactant intactId="EBI-20798606">
        <id>Q38997-2</id>
    </interactant>
    <interactant intactId="EBI-6399237">
        <id>Q5HZ38</id>
        <label>GRIK2</label>
    </interactant>
    <organismsDiffer>false</organismsDiffer>
    <experiments>2</experiments>
</comment>
<comment type="interaction">
    <interactant intactId="EBI-20798606">
        <id>Q38997-2</id>
    </interactant>
    <interactant intactId="EBI-1382964">
        <id>Q42384</id>
        <label>PRL1</label>
    </interactant>
    <organismsDiffer>false</organismsDiffer>
    <experiments>3</experiments>
</comment>
<comment type="subcellular location">
    <molecule>Isoform 1</molecule>
    <subcellularLocation>
        <location evidence="16">Plastid</location>
        <location evidence="16">Chloroplast</location>
    </subcellularLocation>
    <subcellularLocation>
        <location evidence="16 22 27 30 34 35">Cytoplasm</location>
    </subcellularLocation>
    <subcellularLocation>
        <location evidence="14 22 27 30 34 35 37">Nucleus</location>
    </subcellularLocation>
    <subcellularLocation>
        <location evidence="35">Golgi apparatus</location>
    </subcellularLocation>
    <text evidence="30">Shuttles from the cytoplasm to the nucleus when associated with a FLZ protein.</text>
</comment>
<comment type="subcellular location">
    <molecule>Isoform 2</molecule>
    <subcellularLocation>
        <location evidence="34 43">Cytoplasm</location>
    </subcellularLocation>
    <subcellularLocation>
        <location evidence="34 37 43">Nucleus</location>
    </subcellularLocation>
    <subcellularLocation>
        <location evidence="55">Endoplasmic reticulum</location>
    </subcellularLocation>
    <text evidence="55">Co-localized with ER marker when associated with FLZ6 or FLZ10.</text>
</comment>
<comment type="alternative products">
    <event type="alternative splicing"/>
    <isoform>
        <id>Q38997-2</id>
        <name>2</name>
        <sequence type="displayed"/>
    </isoform>
    <isoform>
        <id>Q38997-1</id>
        <name>1</name>
        <sequence type="described" ref="VSP_059890"/>
    </isoform>
</comment>
<comment type="tissue specificity">
    <text evidence="34 35">Isoform 2 is widely expressed, especially in newly developing tissues (PubMed:25697797). Isoform 2 is expressed throughout the seedling, with highest expression in leaf primordia and vascular tissue, and the seedling root tip. Isoform 2 is later expressed in developing lateral root primordia and developing embryos within siliques (PubMed:25071807). Isoform 1 is widely expressed but at very low levels (PubMed:25071807).</text>
</comment>
<comment type="developmental stage">
    <text evidence="49">Expressed throughout embryo development from the heart to mature embryo stages.</text>
</comment>
<comment type="induction">
    <text evidence="6 12 17 20 24 39">Induced by sucrose (PubMed:10220464). Induced by DCMU herbicide (PubMed:17671505). Induced by glucose (PubMed:19302419). Up-regulated by beta-aminobutyric acid (BABA) (PubMed:20484986). Induced by hypoxia following submergence (PubMed:22232383). Induced by salt and oxidative stresses (at the protein level) (PubMed:26471895).</text>
</comment>
<comment type="domain">
    <text evidence="29">The regulatory domain (RD) contains the auto-inhibitory domain (AID) that inhibits kinase activity of the protein kinase domain (KD).</text>
</comment>
<comment type="domain">
    <text evidence="29">The PPI motif mediates the interaction with the ABI (abscisic acid-insensitive) phosphatases.</text>
</comment>
<comment type="PTM">
    <text evidence="6 17 29 37 41">Phosphorylated at Thr-175 in response to glucose (PubMed:19302419). Phosphorylated at Thr-175 under submergence (PubMed:27029354). Autophosphorylated (PubMed:10220464, PubMed:24179127, PubMed:25929516). Dephosphorylated at Thr-175 by ABI1 and PP2CA (PubMed:24179127).</text>
</comment>
<comment type="PTM">
    <text evidence="13 40">Ubiquitinated (PubMed:26662259). Degradation is mediated by a CUL4-based E3 ligase that uses PRL1 as a substrate receptor (PubMed:18223036).</text>
</comment>
<comment type="PTM">
    <text evidence="21 40">Sumoylated by SIZ1 (PubMed:20855607, PubMed:26662259). Sumoylated SnRK1 is ubiquitinated and degraded by the proteasome (PubMed:26662259).</text>
</comment>
<comment type="disruption phenotype">
    <text evidence="12 16 42 48 49 56">Anthocyanin accumulation and accelerated senescence (PubMed:17671505). Starch accumulation during phosphate deficiency (PubMed:19211700). Reduced sensitivity to glucose during early development (PubMed:27436712). Increased seed abortion (PubMed:28922765). Blocked autophagy during abiotic stresses but not under control conditions (PubMed:28783755). Enhanced sucrose-induced hypocotyl elongation (PubMed:29584583).</text>
</comment>
<comment type="miscellaneous">
    <text evidence="47 48 51">Overexpressing plants show delayed leaf senescence, enhanced tolerance to nutrient starvation dependent on a functional autophagy pathway, enhanced formation of autophagosomes, and tolerance to drought and submergence (PubMed:28740502). Overexpression of KIN10 leads to increased autophagy (PubMed:28783755). Overexpression inhibits sucrose-induced hypocotyl elongation (PubMed:29114081).</text>
</comment>
<comment type="similarity">
    <text evidence="61">Belongs to the protein kinase superfamily. CAMK Ser/Thr protein kinase family. SNF1 subfamily.</text>
</comment>
<accession>Q38997</accession>
<accession>A6XGR0</accession>
<accession>O04728</accession>
<accession>Q38987</accession>
<accession>Q39076</accession>
<accession>Q8RWD2</accession>
<name>KIN10_ARATH</name>
<protein>
    <recommendedName>
        <fullName evidence="61">SNF1-related protein kinase catalytic subunit alpha KIN10</fullName>
        <shortName evidence="63 66">AKIN10</shortName>
        <ecNumber evidence="6 12">2.7.11.1</ecNumber>
    </recommendedName>
    <alternativeName>
        <fullName>AKIN alpha-2</fullName>
        <shortName>AKINalpha2</shortName>
    </alternativeName>
    <alternativeName>
        <fullName evidence="60">SNF1-related kinase 1.1</fullName>
        <shortName evidence="60">SnRK1.1</shortName>
    </alternativeName>
</protein>
<organism>
    <name type="scientific">Arabidopsis thaliana</name>
    <name type="common">Mouse-ear cress</name>
    <dbReference type="NCBI Taxonomy" id="3702"/>
    <lineage>
        <taxon>Eukaryota</taxon>
        <taxon>Viridiplantae</taxon>
        <taxon>Streptophyta</taxon>
        <taxon>Embryophyta</taxon>
        <taxon>Tracheophyta</taxon>
        <taxon>Spermatophyta</taxon>
        <taxon>Magnoliopsida</taxon>
        <taxon>eudicotyledons</taxon>
        <taxon>Gunneridae</taxon>
        <taxon>Pentapetalae</taxon>
        <taxon>rosids</taxon>
        <taxon>malvids</taxon>
        <taxon>Brassicales</taxon>
        <taxon>Brassicaceae</taxon>
        <taxon>Camelineae</taxon>
        <taxon>Arabidopsis</taxon>
    </lineage>
</organism>
<evidence type="ECO:0000250" key="1">
    <source>
        <dbReference type="UniProtKB" id="Q93V58"/>
    </source>
</evidence>
<evidence type="ECO:0000255" key="2">
    <source>
        <dbReference type="PROSITE-ProRule" id="PRU00159"/>
    </source>
</evidence>
<evidence type="ECO:0000255" key="3">
    <source>
        <dbReference type="PROSITE-ProRule" id="PRU00212"/>
    </source>
</evidence>
<evidence type="ECO:0000255" key="4">
    <source>
        <dbReference type="PROSITE-ProRule" id="PRU00565"/>
    </source>
</evidence>
<evidence type="ECO:0000255" key="5">
    <source>
        <dbReference type="PROSITE-ProRule" id="PRU10027"/>
    </source>
</evidence>
<evidence type="ECO:0000269" key="6">
    <source>
    </source>
</evidence>
<evidence type="ECO:0000269" key="7">
    <source>
    </source>
</evidence>
<evidence type="ECO:0000269" key="8">
    <source>
    </source>
</evidence>
<evidence type="ECO:0000269" key="9">
    <source>
    </source>
</evidence>
<evidence type="ECO:0000269" key="10">
    <source>
    </source>
</evidence>
<evidence type="ECO:0000269" key="11">
    <source>
    </source>
</evidence>
<evidence type="ECO:0000269" key="12">
    <source>
    </source>
</evidence>
<evidence type="ECO:0000269" key="13">
    <source>
    </source>
</evidence>
<evidence type="ECO:0000269" key="14">
    <source>
    </source>
</evidence>
<evidence type="ECO:0000269" key="15">
    <source>
    </source>
</evidence>
<evidence type="ECO:0000269" key="16">
    <source>
    </source>
</evidence>
<evidence type="ECO:0000269" key="17">
    <source>
    </source>
</evidence>
<evidence type="ECO:0000269" key="18">
    <source>
    </source>
</evidence>
<evidence type="ECO:0000269" key="19">
    <source>
    </source>
</evidence>
<evidence type="ECO:0000269" key="20">
    <source>
    </source>
</evidence>
<evidence type="ECO:0000269" key="21">
    <source>
    </source>
</evidence>
<evidence type="ECO:0000269" key="22">
    <source>
    </source>
</evidence>
<evidence type="ECO:0000269" key="23">
    <source>
    </source>
</evidence>
<evidence type="ECO:0000269" key="24">
    <source>
    </source>
</evidence>
<evidence type="ECO:0000269" key="25">
    <source>
    </source>
</evidence>
<evidence type="ECO:0000269" key="26">
    <source>
    </source>
</evidence>
<evidence type="ECO:0000269" key="27">
    <source>
    </source>
</evidence>
<evidence type="ECO:0000269" key="28">
    <source>
    </source>
</evidence>
<evidence type="ECO:0000269" key="29">
    <source>
    </source>
</evidence>
<evidence type="ECO:0000269" key="30">
    <source>
    </source>
</evidence>
<evidence type="ECO:0000269" key="31">
    <source>
    </source>
</evidence>
<evidence type="ECO:0000269" key="32">
    <source>
    </source>
</evidence>
<evidence type="ECO:0000269" key="33">
    <source>
    </source>
</evidence>
<evidence type="ECO:0000269" key="34">
    <source>
    </source>
</evidence>
<evidence type="ECO:0000269" key="35">
    <source>
    </source>
</evidence>
<evidence type="ECO:0000269" key="36">
    <source>
    </source>
</evidence>
<evidence type="ECO:0000269" key="37">
    <source>
    </source>
</evidence>
<evidence type="ECO:0000269" key="38">
    <source>
    </source>
</evidence>
<evidence type="ECO:0000269" key="39">
    <source>
    </source>
</evidence>
<evidence type="ECO:0000269" key="40">
    <source>
    </source>
</evidence>
<evidence type="ECO:0000269" key="41">
    <source>
    </source>
</evidence>
<evidence type="ECO:0000269" key="42">
    <source>
    </source>
</evidence>
<evidence type="ECO:0000269" key="43">
    <source>
    </source>
</evidence>
<evidence type="ECO:0000269" key="44">
    <source>
    </source>
</evidence>
<evidence type="ECO:0000269" key="45">
    <source>
    </source>
</evidence>
<evidence type="ECO:0000269" key="46">
    <source>
    </source>
</evidence>
<evidence type="ECO:0000269" key="47">
    <source>
    </source>
</evidence>
<evidence type="ECO:0000269" key="48">
    <source>
    </source>
</evidence>
<evidence type="ECO:0000269" key="49">
    <source>
    </source>
</evidence>
<evidence type="ECO:0000269" key="50">
    <source>
    </source>
</evidence>
<evidence type="ECO:0000269" key="51">
    <source>
    </source>
</evidence>
<evidence type="ECO:0000269" key="52">
    <source>
    </source>
</evidence>
<evidence type="ECO:0000269" key="53">
    <source>
    </source>
</evidence>
<evidence type="ECO:0000269" key="54">
    <source>
    </source>
</evidence>
<evidence type="ECO:0000269" key="55">
    <source>
    </source>
</evidence>
<evidence type="ECO:0000269" key="56">
    <source>
    </source>
</evidence>
<evidence type="ECO:0000269" key="57">
    <source>
    </source>
</evidence>
<evidence type="ECO:0000269" key="58">
    <source ref="26"/>
</evidence>
<evidence type="ECO:0000269" key="59">
    <source ref="50"/>
</evidence>
<evidence type="ECO:0000303" key="60">
    <source>
    </source>
</evidence>
<evidence type="ECO:0000305" key="61"/>
<evidence type="ECO:0000312" key="62">
    <source>
        <dbReference type="Araport" id="AT3G01090"/>
    </source>
</evidence>
<evidence type="ECO:0000312" key="63">
    <source>
        <dbReference type="EMBL" id="AAA32736.1"/>
    </source>
</evidence>
<evidence type="ECO:0000312" key="64">
    <source>
        <dbReference type="EMBL" id="AAF26165.1"/>
    </source>
</evidence>
<evidence type="ECO:0000312" key="65">
    <source>
        <dbReference type="EMBL" id="ABH11527.1"/>
    </source>
</evidence>
<evidence type="ECO:0000312" key="66">
    <source>
        <dbReference type="EMBL" id="CAA56146.1"/>
    </source>
</evidence>
<evidence type="ECO:0000312" key="67">
    <source>
        <dbReference type="EMBL" id="CAA60529.1"/>
    </source>
</evidence>
<evidence type="ECO:0000312" key="68">
    <source>
        <dbReference type="EMBL" id="CAA64384.1"/>
    </source>
</evidence>
<evidence type="ECO:0007744" key="69">
    <source>
    </source>
</evidence>
<feature type="chain" id="PRO_0000086128" description="SNF1-related protein kinase catalytic subunit alpha KIN10">
    <location>
        <begin position="1"/>
        <end position="512"/>
    </location>
</feature>
<feature type="domain" description="Protein kinase" evidence="2">
    <location>
        <begin position="19"/>
        <end position="271"/>
    </location>
</feature>
<feature type="domain" description="UBA" evidence="3">
    <location>
        <begin position="292"/>
        <end position="332"/>
    </location>
</feature>
<feature type="domain" description="KA1" evidence="4">
    <location>
        <begin position="463"/>
        <end position="511"/>
    </location>
</feature>
<feature type="region of interest" description="Auto-inhibitory domain (AID)" evidence="29">
    <location>
        <begin position="290"/>
        <end position="389"/>
    </location>
</feature>
<feature type="region of interest" description="Regulatory domain (RD)" evidence="29">
    <location>
        <begin position="294"/>
        <end position="512"/>
    </location>
</feature>
<feature type="region of interest" description="PPI" evidence="29">
    <location>
        <begin position="390"/>
        <end position="512"/>
    </location>
</feature>
<feature type="active site" description="Proton acceptor" evidence="2 5">
    <location>
        <position position="142"/>
    </location>
</feature>
<feature type="binding site" evidence="2">
    <location>
        <begin position="25"/>
        <end position="33"/>
    </location>
    <ligand>
        <name>ATP</name>
        <dbReference type="ChEBI" id="CHEBI:30616"/>
    </ligand>
</feature>
<feature type="binding site" evidence="2 12 41">
    <location>
        <position position="48"/>
    </location>
    <ligand>
        <name>ATP</name>
        <dbReference type="ChEBI" id="CHEBI:30616"/>
    </ligand>
</feature>
<feature type="modified residue" description="Phosphoserine" evidence="1">
    <location>
        <position position="164"/>
    </location>
</feature>
<feature type="modified residue" description="Phosphothreonine; by GRIK1 or GRIK2" evidence="17 18 29 41 43">
    <location>
        <position position="175"/>
    </location>
</feature>
<feature type="modified residue" description="Phosphoserine" evidence="39">
    <location>
        <position position="364"/>
    </location>
</feature>
<feature type="cross-link" description="Glycyl lysine isopeptide (Lys-Gly) (interchain with G-Cter in ubiquitin)" evidence="69">
    <location>
        <position position="20"/>
    </location>
</feature>
<feature type="cross-link" description="Glycyl lysine isopeptide (Lys-Gly) (interchain with G-Cter in SUMO)" evidence="40">
    <location>
        <position position="34"/>
    </location>
</feature>
<feature type="cross-link" description="Glycyl lysine isopeptide (Lys-Gly) (interchain with G-Cter in SUMO)" evidence="40">
    <location>
        <position position="63"/>
    </location>
</feature>
<feature type="cross-link" description="Glycyl lysine isopeptide (Lys-Gly) (interchain with G-Cter in SUMO)" evidence="40">
    <location>
        <position position="390"/>
    </location>
</feature>
<feature type="splice variant" id="VSP_059890" description="In isoform 1.">
    <original>M</original>
    <variation>MFKRVDEFNLVSSTIDHRIFKSRM</variation>
    <location>
        <position position="1"/>
    </location>
</feature>
<feature type="mutagenesis site" description="Abolishes sumoylation. When associated with R-63 and R-390." evidence="40">
    <original>K</original>
    <variation>R</variation>
    <location>
        <position position="34"/>
    </location>
</feature>
<feature type="mutagenesis site" description="Abolishes kinase activity. Enhances sensitivity to submergence." evidence="12 41">
    <original>K</original>
    <variation>M</variation>
    <location>
        <position position="48"/>
    </location>
</feature>
<feature type="mutagenesis site" description="Abolishes sumoylation. When associated with R-34 and R-390." evidence="40">
    <original>K</original>
    <variation>R</variation>
    <location>
        <position position="63"/>
    </location>
</feature>
<feature type="mutagenesis site" description="Reduced kinase activity and retained redox sensitivity." evidence="50">
    <original>C</original>
    <variation>S</variation>
    <location>
        <position position="133"/>
    </location>
</feature>
<feature type="mutagenesis site" description="Abolishes phosphorylation by GRIK1 or GRIK2 leading to inactivation of the protein. Enhances sensitivity to submergence." evidence="12 18 19 41">
    <original>T</original>
    <variation>A</variation>
    <location>
        <position position="175"/>
    </location>
</feature>
<feature type="mutagenesis site" description="Enhances tolerance to submergence." evidence="41">
    <original>T</original>
    <variation>D</variation>
    <location>
        <position position="175"/>
    </location>
</feature>
<feature type="mutagenesis site" description="Retained kinase activity and abolished redox sensitivity." evidence="50">
    <original>C</original>
    <variation>S</variation>
    <location>
        <position position="177"/>
    </location>
</feature>
<feature type="mutagenesis site" description="Abolishes sumoylation. When associated with R-34 and R-63." evidence="40">
    <original>K</original>
    <variation>R</variation>
    <location>
        <position position="390"/>
    </location>
</feature>
<sequence>MDGSGTGSRSGVESILPNYKLGRTLGIGSFGRVKIAEHALTGHKVAIKILNRRKIKNMEMEEKVRREIKILRLFMHPHIIRLYEVIETPTDIYLVMEYVNSGELFDYIVEKGRLQEDEARNFFQQIISGVEYCHRNMVVHRDLKPENLLLDSKCNVKIADFGLSNIMRDGHFLKTSCGSPNYAAPEVISGKLYAGPEVDVWSCGVILYALLCGTLPFDDENIPNLFKKIKGGIYTLPSHLSPGARDLIPRMLVVDPMKRVTIPEIRQHPWFQAHLPRYLAVPPPDTVQQAKKIDEEILQEVINMGFDRNHLIESLRNRTQNDGTVTYYLILDNRFRASSGYLGAEFQETMEGTPRMHPAESVASPVSHRLPGLMEYQGVGLRSQYPVERKWALGLQSRAHPREIMTEVLKALQDLNVCWKKIGHYNMKCRWVPNSSADGMLSNSMHDNNYFGDESSIIENEAAVKSPNVVKFEIQLYKTRDDKYLLDLQRVQGPQFLFLDLCAAFLAQLRVL</sequence>
<dbReference type="EC" id="2.7.11.1" evidence="6 12"/>
<dbReference type="EMBL" id="M93023">
    <property type="protein sequence ID" value="AAA32736.1"/>
    <property type="molecule type" value="Genomic_DNA"/>
</dbReference>
<dbReference type="EMBL" id="X94757">
    <property type="protein sequence ID" value="CAA64384.1"/>
    <property type="molecule type" value="mRNA"/>
</dbReference>
<dbReference type="EMBL" id="DQ778957">
    <property type="protein sequence ID" value="ABH11527.1"/>
    <property type="molecule type" value="mRNA"/>
</dbReference>
<dbReference type="EMBL" id="AC008261">
    <property type="protein sequence ID" value="AAF26165.1"/>
    <property type="molecule type" value="Genomic_DNA"/>
</dbReference>
<dbReference type="EMBL" id="CP002686">
    <property type="protein sequence ID" value="AEE73607.1"/>
    <property type="molecule type" value="Genomic_DNA"/>
</dbReference>
<dbReference type="EMBL" id="CP002686">
    <property type="protein sequence ID" value="AEE73608.1"/>
    <property type="molecule type" value="Genomic_DNA"/>
</dbReference>
<dbReference type="EMBL" id="CP002686">
    <property type="protein sequence ID" value="AEE73609.1"/>
    <property type="molecule type" value="Genomic_DNA"/>
</dbReference>
<dbReference type="EMBL" id="AY093170">
    <property type="protein sequence ID" value="AAM13169.1"/>
    <property type="molecule type" value="mRNA"/>
</dbReference>
<dbReference type="EMBL" id="BT010386">
    <property type="protein sequence ID" value="AAQ56829.1"/>
    <property type="molecule type" value="mRNA"/>
</dbReference>
<dbReference type="EMBL" id="X79707">
    <property type="protein sequence ID" value="CAA56146.1"/>
    <property type="molecule type" value="Genomic_DNA"/>
</dbReference>
<dbReference type="EMBL" id="X86966">
    <property type="protein sequence ID" value="CAA60529.1"/>
    <property type="molecule type" value="Genomic_DNA"/>
</dbReference>
<dbReference type="PIR" id="JC1446">
    <property type="entry name" value="JC1446"/>
</dbReference>
<dbReference type="RefSeq" id="NP_001118546.1">
    <molecule id="Q38997-2"/>
    <property type="nucleotide sequence ID" value="NM_001125074.2"/>
</dbReference>
<dbReference type="RefSeq" id="NP_566130.1">
    <molecule id="Q38997-2"/>
    <property type="nucleotide sequence ID" value="NM_110974.5"/>
</dbReference>
<dbReference type="RefSeq" id="NP_850488.1">
    <molecule id="Q38997-1"/>
    <property type="nucleotide sequence ID" value="NM_180157.1"/>
</dbReference>
<dbReference type="SMR" id="Q38997"/>
<dbReference type="BioGRID" id="6592">
    <property type="interactions" value="88"/>
</dbReference>
<dbReference type="FunCoup" id="Q38997">
    <property type="interactions" value="4176"/>
</dbReference>
<dbReference type="IntAct" id="Q38997">
    <property type="interactions" value="146"/>
</dbReference>
<dbReference type="STRING" id="3702.Q38997"/>
<dbReference type="iPTMnet" id="Q38997"/>
<dbReference type="PaxDb" id="3702-AT3G01090.2"/>
<dbReference type="ProteomicsDB" id="238213">
    <molecule id="Q38997-2"/>
</dbReference>
<dbReference type="EnsemblPlants" id="AT3G01090.1">
    <molecule id="Q38997-2"/>
    <property type="protein sequence ID" value="AT3G01090.1"/>
    <property type="gene ID" value="AT3G01090"/>
</dbReference>
<dbReference type="EnsemblPlants" id="AT3G01090.2">
    <molecule id="Q38997-1"/>
    <property type="protein sequence ID" value="AT3G01090.2"/>
    <property type="gene ID" value="AT3G01090"/>
</dbReference>
<dbReference type="EnsemblPlants" id="AT3G01090.3">
    <molecule id="Q38997-2"/>
    <property type="protein sequence ID" value="AT3G01090.3"/>
    <property type="gene ID" value="AT3G01090"/>
</dbReference>
<dbReference type="GeneID" id="821259"/>
<dbReference type="Gramene" id="AT3G01090.1">
    <molecule id="Q38997-2"/>
    <property type="protein sequence ID" value="AT3G01090.1"/>
    <property type="gene ID" value="AT3G01090"/>
</dbReference>
<dbReference type="Gramene" id="AT3G01090.2">
    <molecule id="Q38997-1"/>
    <property type="protein sequence ID" value="AT3G01090.2"/>
    <property type="gene ID" value="AT3G01090"/>
</dbReference>
<dbReference type="Gramene" id="AT3G01090.3">
    <molecule id="Q38997-2"/>
    <property type="protein sequence ID" value="AT3G01090.3"/>
    <property type="gene ID" value="AT3G01090"/>
</dbReference>
<dbReference type="KEGG" id="ath:AT3G01090"/>
<dbReference type="Araport" id="AT3G01090"/>
<dbReference type="TAIR" id="AT3G01090">
    <property type="gene designation" value="KIN10"/>
</dbReference>
<dbReference type="eggNOG" id="KOG0583">
    <property type="taxonomic scope" value="Eukaryota"/>
</dbReference>
<dbReference type="InParanoid" id="Q38997"/>
<dbReference type="OMA" id="ANPREVM"/>
<dbReference type="PhylomeDB" id="Q38997"/>
<dbReference type="BRENDA" id="2.7.11.1">
    <property type="organism ID" value="399"/>
</dbReference>
<dbReference type="PRO" id="PR:Q38997"/>
<dbReference type="Proteomes" id="UP000006548">
    <property type="component" value="Chromosome 3"/>
</dbReference>
<dbReference type="ExpressionAtlas" id="Q38997">
    <property type="expression patterns" value="baseline and differential"/>
</dbReference>
<dbReference type="GO" id="GO:0009507">
    <property type="term" value="C:chloroplast"/>
    <property type="evidence" value="ECO:0000314"/>
    <property type="project" value="UniProtKB"/>
</dbReference>
<dbReference type="GO" id="GO:0005737">
    <property type="term" value="C:cytoplasm"/>
    <property type="evidence" value="ECO:0000314"/>
    <property type="project" value="UniProtKB"/>
</dbReference>
<dbReference type="GO" id="GO:0005829">
    <property type="term" value="C:cytosol"/>
    <property type="evidence" value="ECO:0000314"/>
    <property type="project" value="UniProtKB"/>
</dbReference>
<dbReference type="GO" id="GO:0005783">
    <property type="term" value="C:endoplasmic reticulum"/>
    <property type="evidence" value="ECO:0007669"/>
    <property type="project" value="UniProtKB-SubCell"/>
</dbReference>
<dbReference type="GO" id="GO:0005794">
    <property type="term" value="C:Golgi apparatus"/>
    <property type="evidence" value="ECO:0000314"/>
    <property type="project" value="UniProtKB"/>
</dbReference>
<dbReference type="GO" id="GO:0000152">
    <property type="term" value="C:nuclear ubiquitin ligase complex"/>
    <property type="evidence" value="ECO:0000353"/>
    <property type="project" value="TAIR"/>
</dbReference>
<dbReference type="GO" id="GO:0005634">
    <property type="term" value="C:nucleus"/>
    <property type="evidence" value="ECO:0000314"/>
    <property type="project" value="UniProtKB"/>
</dbReference>
<dbReference type="GO" id="GO:0005524">
    <property type="term" value="F:ATP binding"/>
    <property type="evidence" value="ECO:0007669"/>
    <property type="project" value="UniProtKB-KW"/>
</dbReference>
<dbReference type="GO" id="GO:0016301">
    <property type="term" value="F:kinase activity"/>
    <property type="evidence" value="ECO:0000314"/>
    <property type="project" value="UniProtKB"/>
</dbReference>
<dbReference type="GO" id="GO:0019900">
    <property type="term" value="F:kinase binding"/>
    <property type="evidence" value="ECO:0000353"/>
    <property type="project" value="UniProtKB"/>
</dbReference>
<dbReference type="GO" id="GO:0019902">
    <property type="term" value="F:phosphatase binding"/>
    <property type="evidence" value="ECO:0000353"/>
    <property type="project" value="UniProtKB"/>
</dbReference>
<dbReference type="GO" id="GO:0106310">
    <property type="term" value="F:protein serine kinase activity"/>
    <property type="evidence" value="ECO:0007669"/>
    <property type="project" value="RHEA"/>
</dbReference>
<dbReference type="GO" id="GO:0004674">
    <property type="term" value="F:protein serine/threonine kinase activity"/>
    <property type="evidence" value="ECO:0000314"/>
    <property type="project" value="TAIR"/>
</dbReference>
<dbReference type="GO" id="GO:0009738">
    <property type="term" value="P:abscisic acid-activated signaling pathway"/>
    <property type="evidence" value="ECO:0000315"/>
    <property type="project" value="TAIR"/>
</dbReference>
<dbReference type="GO" id="GO:0009594">
    <property type="term" value="P:detection of nutrient"/>
    <property type="evidence" value="ECO:0000314"/>
    <property type="project" value="TAIR"/>
</dbReference>
<dbReference type="GO" id="GO:0003006">
    <property type="term" value="P:developmental process involved in reproduction"/>
    <property type="evidence" value="ECO:0000315"/>
    <property type="project" value="TAIR"/>
</dbReference>
<dbReference type="GO" id="GO:0006633">
    <property type="term" value="P:fatty acid biosynthetic process"/>
    <property type="evidence" value="ECO:0007669"/>
    <property type="project" value="UniProtKB-KW"/>
</dbReference>
<dbReference type="GO" id="GO:0010150">
    <property type="term" value="P:leaf senescence"/>
    <property type="evidence" value="ECO:0000315"/>
    <property type="project" value="TAIR"/>
</dbReference>
<dbReference type="GO" id="GO:0042128">
    <property type="term" value="P:nitrate assimilation"/>
    <property type="evidence" value="ECO:0007669"/>
    <property type="project" value="UniProtKB-KW"/>
</dbReference>
<dbReference type="GO" id="GO:0099402">
    <property type="term" value="P:plant organ development"/>
    <property type="evidence" value="ECO:0000315"/>
    <property type="project" value="UniProtKB"/>
</dbReference>
<dbReference type="GO" id="GO:0009789">
    <property type="term" value="P:positive regulation of abscisic acid-activated signaling pathway"/>
    <property type="evidence" value="ECO:0000315"/>
    <property type="project" value="UniProtKB"/>
</dbReference>
<dbReference type="GO" id="GO:0010508">
    <property type="term" value="P:positive regulation of autophagy"/>
    <property type="evidence" value="ECO:0000315"/>
    <property type="project" value="UniProtKB"/>
</dbReference>
<dbReference type="GO" id="GO:0080022">
    <property type="term" value="P:primary root development"/>
    <property type="evidence" value="ECO:0000315"/>
    <property type="project" value="TAIR"/>
</dbReference>
<dbReference type="GO" id="GO:1900055">
    <property type="term" value="P:regulation of leaf senescence"/>
    <property type="evidence" value="ECO:0000314"/>
    <property type="project" value="UniProtKB"/>
</dbReference>
<dbReference type="GO" id="GO:0009749">
    <property type="term" value="P:response to glucose"/>
    <property type="evidence" value="ECO:0000314"/>
    <property type="project" value="UniProtKB"/>
</dbReference>
<dbReference type="GO" id="GO:0009635">
    <property type="term" value="P:response to herbicide"/>
    <property type="evidence" value="ECO:0000270"/>
    <property type="project" value="UniProtKB"/>
</dbReference>
<dbReference type="GO" id="GO:0001666">
    <property type="term" value="P:response to hypoxia"/>
    <property type="evidence" value="ECO:0000314"/>
    <property type="project" value="UniProtKB"/>
</dbReference>
<dbReference type="GO" id="GO:0006979">
    <property type="term" value="P:response to oxidative stress"/>
    <property type="evidence" value="ECO:0000270"/>
    <property type="project" value="UniProtKB"/>
</dbReference>
<dbReference type="GO" id="GO:1902074">
    <property type="term" value="P:response to salt"/>
    <property type="evidence" value="ECO:0000270"/>
    <property type="project" value="UniProtKB"/>
</dbReference>
<dbReference type="GO" id="GO:0005982">
    <property type="term" value="P:starch metabolic process"/>
    <property type="evidence" value="ECO:0000315"/>
    <property type="project" value="UniProtKB"/>
</dbReference>
<dbReference type="GO" id="GO:0010182">
    <property type="term" value="P:sugar mediated signaling pathway"/>
    <property type="evidence" value="ECO:0000315"/>
    <property type="project" value="TAIR"/>
</dbReference>
<dbReference type="GO" id="GO:0010050">
    <property type="term" value="P:vegetative phase change"/>
    <property type="evidence" value="ECO:0000315"/>
    <property type="project" value="TAIR"/>
</dbReference>
<dbReference type="GO" id="GO:0010228">
    <property type="term" value="P:vegetative to reproductive phase transition of meristem"/>
    <property type="evidence" value="ECO:0000315"/>
    <property type="project" value="UniProtKB"/>
</dbReference>
<dbReference type="CDD" id="cd12122">
    <property type="entry name" value="AMPKA_C"/>
    <property type="match status" value="1"/>
</dbReference>
<dbReference type="CDD" id="cd14079">
    <property type="entry name" value="STKc_AMPK_alpha"/>
    <property type="match status" value="1"/>
</dbReference>
<dbReference type="CDD" id="cd14335">
    <property type="entry name" value="UBA_SnRK1_plant"/>
    <property type="match status" value="1"/>
</dbReference>
<dbReference type="FunFam" id="1.10.510.10:FF:000204">
    <property type="entry name" value="Non-specific serine/threonine protein kinase"/>
    <property type="match status" value="1"/>
</dbReference>
<dbReference type="FunFam" id="3.30.200.20:FF:000236">
    <property type="entry name" value="Non-specific serine/threonine protein kinase"/>
    <property type="match status" value="1"/>
</dbReference>
<dbReference type="FunFam" id="3.30.310.80:FF:000006">
    <property type="entry name" value="Non-specific serine/threonine protein kinase"/>
    <property type="match status" value="1"/>
</dbReference>
<dbReference type="Gene3D" id="3.30.310.80">
    <property type="entry name" value="Kinase associated domain 1, KA1"/>
    <property type="match status" value="1"/>
</dbReference>
<dbReference type="Gene3D" id="1.10.510.10">
    <property type="entry name" value="Transferase(Phosphotransferase) domain 1"/>
    <property type="match status" value="1"/>
</dbReference>
<dbReference type="InterPro" id="IPR028375">
    <property type="entry name" value="KA1/Ssp2_C"/>
</dbReference>
<dbReference type="InterPro" id="IPR001772">
    <property type="entry name" value="KA1_dom"/>
</dbReference>
<dbReference type="InterPro" id="IPR011009">
    <property type="entry name" value="Kinase-like_dom_sf"/>
</dbReference>
<dbReference type="InterPro" id="IPR000719">
    <property type="entry name" value="Prot_kinase_dom"/>
</dbReference>
<dbReference type="InterPro" id="IPR017441">
    <property type="entry name" value="Protein_kinase_ATP_BS"/>
</dbReference>
<dbReference type="InterPro" id="IPR008271">
    <property type="entry name" value="Ser/Thr_kinase_AS"/>
</dbReference>
<dbReference type="InterPro" id="IPR015940">
    <property type="entry name" value="UBA"/>
</dbReference>
<dbReference type="InterPro" id="IPR009060">
    <property type="entry name" value="UBA-like_sf"/>
</dbReference>
<dbReference type="PANTHER" id="PTHR24346:SF82">
    <property type="entry name" value="KP78A-RELATED"/>
    <property type="match status" value="1"/>
</dbReference>
<dbReference type="PANTHER" id="PTHR24346">
    <property type="entry name" value="MAP/MICROTUBULE AFFINITY-REGULATING KINASE"/>
    <property type="match status" value="1"/>
</dbReference>
<dbReference type="Pfam" id="PF02149">
    <property type="entry name" value="KA1"/>
    <property type="match status" value="1"/>
</dbReference>
<dbReference type="Pfam" id="PF00069">
    <property type="entry name" value="Pkinase"/>
    <property type="match status" value="1"/>
</dbReference>
<dbReference type="Pfam" id="PF00627">
    <property type="entry name" value="UBA"/>
    <property type="match status" value="1"/>
</dbReference>
<dbReference type="SMART" id="SM00220">
    <property type="entry name" value="S_TKc"/>
    <property type="match status" value="1"/>
</dbReference>
<dbReference type="SMART" id="SM00165">
    <property type="entry name" value="UBA"/>
    <property type="match status" value="1"/>
</dbReference>
<dbReference type="SUPFAM" id="SSF103243">
    <property type="entry name" value="KA1-like"/>
    <property type="match status" value="1"/>
</dbReference>
<dbReference type="SUPFAM" id="SSF56112">
    <property type="entry name" value="Protein kinase-like (PK-like)"/>
    <property type="match status" value="1"/>
</dbReference>
<dbReference type="SUPFAM" id="SSF46934">
    <property type="entry name" value="UBA-like"/>
    <property type="match status" value="1"/>
</dbReference>
<dbReference type="PROSITE" id="PS50032">
    <property type="entry name" value="KA1"/>
    <property type="match status" value="1"/>
</dbReference>
<dbReference type="PROSITE" id="PS00107">
    <property type="entry name" value="PROTEIN_KINASE_ATP"/>
    <property type="match status" value="1"/>
</dbReference>
<dbReference type="PROSITE" id="PS50011">
    <property type="entry name" value="PROTEIN_KINASE_DOM"/>
    <property type="match status" value="1"/>
</dbReference>
<dbReference type="PROSITE" id="PS00108">
    <property type="entry name" value="PROTEIN_KINASE_ST"/>
    <property type="match status" value="1"/>
</dbReference>
<dbReference type="PROSITE" id="PS50030">
    <property type="entry name" value="UBA"/>
    <property type="match status" value="1"/>
</dbReference>
<keyword id="KW-0025">Alternative splicing</keyword>
<keyword id="KW-0067">ATP-binding</keyword>
<keyword id="KW-0119">Carbohydrate metabolism</keyword>
<keyword id="KW-0150">Chloroplast</keyword>
<keyword id="KW-0963">Cytoplasm</keyword>
<keyword id="KW-0256">Endoplasmic reticulum</keyword>
<keyword id="KW-0275">Fatty acid biosynthesis</keyword>
<keyword id="KW-0276">Fatty acid metabolism</keyword>
<keyword id="KW-0333">Golgi apparatus</keyword>
<keyword id="KW-1017">Isopeptide bond</keyword>
<keyword id="KW-0418">Kinase</keyword>
<keyword id="KW-0444">Lipid biosynthesis</keyword>
<keyword id="KW-0443">Lipid metabolism</keyword>
<keyword id="KW-0534">Nitrate assimilation</keyword>
<keyword id="KW-0547">Nucleotide-binding</keyword>
<keyword id="KW-0539">Nucleus</keyword>
<keyword id="KW-0597">Phosphoprotein</keyword>
<keyword id="KW-0934">Plastid</keyword>
<keyword id="KW-1185">Reference proteome</keyword>
<keyword id="KW-0723">Serine/threonine-protein kinase</keyword>
<keyword id="KW-0808">Transferase</keyword>
<keyword id="KW-0832">Ubl conjugation</keyword>
<keyword id="KW-0833">Ubl conjugation pathway</keyword>